<comment type="function">
    <text evidence="1">Catalyzes a salvage reaction resulting in the formation of AMP, that is energically less costly than de novo synthesis.</text>
</comment>
<comment type="catalytic activity">
    <reaction evidence="1">
        <text>AMP + diphosphate = 5-phospho-alpha-D-ribose 1-diphosphate + adenine</text>
        <dbReference type="Rhea" id="RHEA:16609"/>
        <dbReference type="ChEBI" id="CHEBI:16708"/>
        <dbReference type="ChEBI" id="CHEBI:33019"/>
        <dbReference type="ChEBI" id="CHEBI:58017"/>
        <dbReference type="ChEBI" id="CHEBI:456215"/>
        <dbReference type="EC" id="2.4.2.7"/>
    </reaction>
</comment>
<comment type="pathway">
    <text evidence="1">Purine metabolism; AMP biosynthesis via salvage pathway; AMP from adenine: step 1/1.</text>
</comment>
<comment type="subunit">
    <text evidence="1">Homodimer.</text>
</comment>
<comment type="subcellular location">
    <subcellularLocation>
        <location evidence="1">Cytoplasm</location>
    </subcellularLocation>
</comment>
<comment type="similarity">
    <text evidence="1">Belongs to the purine/pyrimidine phosphoribosyltransferase family.</text>
</comment>
<proteinExistence type="inferred from homology"/>
<gene>
    <name evidence="1" type="primary">apt</name>
    <name type="ordered locus">Pden_3620</name>
</gene>
<dbReference type="EC" id="2.4.2.7" evidence="1"/>
<dbReference type="EMBL" id="CP000490">
    <property type="protein sequence ID" value="ABL71687.1"/>
    <property type="molecule type" value="Genomic_DNA"/>
</dbReference>
<dbReference type="RefSeq" id="WP_011749856.1">
    <property type="nucleotide sequence ID" value="NC_008687.1"/>
</dbReference>
<dbReference type="SMR" id="A1B843"/>
<dbReference type="STRING" id="318586.Pden_3620"/>
<dbReference type="EnsemblBacteria" id="ABL71687">
    <property type="protein sequence ID" value="ABL71687"/>
    <property type="gene ID" value="Pden_3620"/>
</dbReference>
<dbReference type="GeneID" id="93453274"/>
<dbReference type="KEGG" id="pde:Pden_3620"/>
<dbReference type="eggNOG" id="COG0503">
    <property type="taxonomic scope" value="Bacteria"/>
</dbReference>
<dbReference type="HOGENOM" id="CLU_063339_3_0_5"/>
<dbReference type="OrthoDB" id="9803963at2"/>
<dbReference type="UniPathway" id="UPA00588">
    <property type="reaction ID" value="UER00646"/>
</dbReference>
<dbReference type="Proteomes" id="UP000000361">
    <property type="component" value="Chromosome 2"/>
</dbReference>
<dbReference type="GO" id="GO:0005737">
    <property type="term" value="C:cytoplasm"/>
    <property type="evidence" value="ECO:0007669"/>
    <property type="project" value="UniProtKB-SubCell"/>
</dbReference>
<dbReference type="GO" id="GO:0003999">
    <property type="term" value="F:adenine phosphoribosyltransferase activity"/>
    <property type="evidence" value="ECO:0007669"/>
    <property type="project" value="UniProtKB-UniRule"/>
</dbReference>
<dbReference type="GO" id="GO:0006168">
    <property type="term" value="P:adenine salvage"/>
    <property type="evidence" value="ECO:0007669"/>
    <property type="project" value="InterPro"/>
</dbReference>
<dbReference type="GO" id="GO:0044209">
    <property type="term" value="P:AMP salvage"/>
    <property type="evidence" value="ECO:0007669"/>
    <property type="project" value="UniProtKB-UniRule"/>
</dbReference>
<dbReference type="GO" id="GO:0006166">
    <property type="term" value="P:purine ribonucleoside salvage"/>
    <property type="evidence" value="ECO:0007669"/>
    <property type="project" value="UniProtKB-KW"/>
</dbReference>
<dbReference type="CDD" id="cd06223">
    <property type="entry name" value="PRTases_typeI"/>
    <property type="match status" value="1"/>
</dbReference>
<dbReference type="FunFam" id="3.40.50.2020:FF:000021">
    <property type="entry name" value="Adenine phosphoribosyltransferase"/>
    <property type="match status" value="1"/>
</dbReference>
<dbReference type="Gene3D" id="3.40.50.2020">
    <property type="match status" value="1"/>
</dbReference>
<dbReference type="HAMAP" id="MF_00004">
    <property type="entry name" value="Aden_phosphoribosyltr"/>
    <property type="match status" value="1"/>
</dbReference>
<dbReference type="InterPro" id="IPR005764">
    <property type="entry name" value="Ade_phspho_trans"/>
</dbReference>
<dbReference type="InterPro" id="IPR050120">
    <property type="entry name" value="Adenine_PRTase"/>
</dbReference>
<dbReference type="InterPro" id="IPR000836">
    <property type="entry name" value="PRibTrfase_dom"/>
</dbReference>
<dbReference type="InterPro" id="IPR029057">
    <property type="entry name" value="PRTase-like"/>
</dbReference>
<dbReference type="NCBIfam" id="TIGR01090">
    <property type="entry name" value="apt"/>
    <property type="match status" value="1"/>
</dbReference>
<dbReference type="NCBIfam" id="NF002634">
    <property type="entry name" value="PRK02304.1-3"/>
    <property type="match status" value="1"/>
</dbReference>
<dbReference type="NCBIfam" id="NF002636">
    <property type="entry name" value="PRK02304.1-5"/>
    <property type="match status" value="1"/>
</dbReference>
<dbReference type="PANTHER" id="PTHR11776">
    <property type="entry name" value="ADENINE PHOSPHORIBOSYLTRANSFERASE"/>
    <property type="match status" value="1"/>
</dbReference>
<dbReference type="PANTHER" id="PTHR11776:SF7">
    <property type="entry name" value="PHOSPHORIBOSYLTRANSFERASE DOMAIN-CONTAINING PROTEIN"/>
    <property type="match status" value="1"/>
</dbReference>
<dbReference type="Pfam" id="PF00156">
    <property type="entry name" value="Pribosyltran"/>
    <property type="match status" value="1"/>
</dbReference>
<dbReference type="SUPFAM" id="SSF53271">
    <property type="entry name" value="PRTase-like"/>
    <property type="match status" value="1"/>
</dbReference>
<dbReference type="PROSITE" id="PS00103">
    <property type="entry name" value="PUR_PYR_PR_TRANSFER"/>
    <property type="match status" value="1"/>
</dbReference>
<organism>
    <name type="scientific">Paracoccus denitrificans (strain Pd 1222)</name>
    <dbReference type="NCBI Taxonomy" id="318586"/>
    <lineage>
        <taxon>Bacteria</taxon>
        <taxon>Pseudomonadati</taxon>
        <taxon>Pseudomonadota</taxon>
        <taxon>Alphaproteobacteria</taxon>
        <taxon>Rhodobacterales</taxon>
        <taxon>Paracoccaceae</taxon>
        <taxon>Paracoccus</taxon>
    </lineage>
</organism>
<sequence length="187" mass="19854">METPAGKRRRDSRTVRDYIRTIVDFPHEGILFRDVTTLFADARGFRMAVDQLLAAYAGEDIDKVVGLEARGFILGGAVAHQLSVGFVPIRKKGKLPGAVISQAYALEYGKAVMEIHDDALKPGERVLIVDDLLATGGTAAAGISLCGRLGAEVVGCAFVIELPELGGRALLEGLGHEVHALTAFEGA</sequence>
<keyword id="KW-0963">Cytoplasm</keyword>
<keyword id="KW-0328">Glycosyltransferase</keyword>
<keyword id="KW-0660">Purine salvage</keyword>
<keyword id="KW-1185">Reference proteome</keyword>
<keyword id="KW-0808">Transferase</keyword>
<reference key="1">
    <citation type="submission" date="2006-12" db="EMBL/GenBank/DDBJ databases">
        <title>Complete sequence of chromosome 2 of Paracoccus denitrificans PD1222.</title>
        <authorList>
            <person name="Copeland A."/>
            <person name="Lucas S."/>
            <person name="Lapidus A."/>
            <person name="Barry K."/>
            <person name="Detter J.C."/>
            <person name="Glavina del Rio T."/>
            <person name="Hammon N."/>
            <person name="Israni S."/>
            <person name="Dalin E."/>
            <person name="Tice H."/>
            <person name="Pitluck S."/>
            <person name="Munk A.C."/>
            <person name="Brettin T."/>
            <person name="Bruce D."/>
            <person name="Han C."/>
            <person name="Tapia R."/>
            <person name="Gilna P."/>
            <person name="Schmutz J."/>
            <person name="Larimer F."/>
            <person name="Land M."/>
            <person name="Hauser L."/>
            <person name="Kyrpides N."/>
            <person name="Lykidis A."/>
            <person name="Spiro S."/>
            <person name="Richardson D.J."/>
            <person name="Moir J.W.B."/>
            <person name="Ferguson S.J."/>
            <person name="van Spanning R.J.M."/>
            <person name="Richardson P."/>
        </authorList>
    </citation>
    <scope>NUCLEOTIDE SEQUENCE [LARGE SCALE GENOMIC DNA]</scope>
    <source>
        <strain>Pd 1222</strain>
    </source>
</reference>
<accession>A1B843</accession>
<feature type="chain" id="PRO_0000321379" description="Adenine phosphoribosyltransferase">
    <location>
        <begin position="1"/>
        <end position="187"/>
    </location>
</feature>
<name>APT_PARDP</name>
<protein>
    <recommendedName>
        <fullName evidence="1">Adenine phosphoribosyltransferase</fullName>
        <shortName evidence="1">APRT</shortName>
        <ecNumber evidence="1">2.4.2.7</ecNumber>
    </recommendedName>
</protein>
<evidence type="ECO:0000255" key="1">
    <source>
        <dbReference type="HAMAP-Rule" id="MF_00004"/>
    </source>
</evidence>